<proteinExistence type="inferred from homology"/>
<gene>
    <name evidence="1" type="primary">bioB</name>
    <name type="ordered locus">aq_975</name>
</gene>
<reference key="1">
    <citation type="journal article" date="1998" name="Nature">
        <title>The complete genome of the hyperthermophilic bacterium Aquifex aeolicus.</title>
        <authorList>
            <person name="Deckert G."/>
            <person name="Warren P.V."/>
            <person name="Gaasterland T."/>
            <person name="Young W.G."/>
            <person name="Lenox A.L."/>
            <person name="Graham D.E."/>
            <person name="Overbeek R."/>
            <person name="Snead M.A."/>
            <person name="Keller M."/>
            <person name="Aujay M."/>
            <person name="Huber R."/>
            <person name="Feldman R.A."/>
            <person name="Short J.M."/>
            <person name="Olsen G.J."/>
            <person name="Swanson R.V."/>
        </authorList>
    </citation>
    <scope>NUCLEOTIDE SEQUENCE [LARGE SCALE GENOMIC DNA]</scope>
    <source>
        <strain>VF5</strain>
    </source>
</reference>
<name>BIOB_AQUAE</name>
<feature type="chain" id="PRO_0000381206" description="Biotin synthase">
    <location>
        <begin position="1"/>
        <end position="332"/>
    </location>
</feature>
<feature type="domain" description="Radical SAM core" evidence="2">
    <location>
        <begin position="52"/>
        <end position="282"/>
    </location>
</feature>
<feature type="binding site" evidence="1">
    <location>
        <position position="70"/>
    </location>
    <ligand>
        <name>[4Fe-4S] cluster</name>
        <dbReference type="ChEBI" id="CHEBI:49883"/>
        <note>4Fe-4S-S-AdoMet</note>
    </ligand>
</feature>
<feature type="binding site" evidence="1">
    <location>
        <position position="74"/>
    </location>
    <ligand>
        <name>[4Fe-4S] cluster</name>
        <dbReference type="ChEBI" id="CHEBI:49883"/>
        <note>4Fe-4S-S-AdoMet</note>
    </ligand>
</feature>
<feature type="binding site" evidence="1">
    <location>
        <position position="77"/>
    </location>
    <ligand>
        <name>[4Fe-4S] cluster</name>
        <dbReference type="ChEBI" id="CHEBI:49883"/>
        <note>4Fe-4S-S-AdoMet</note>
    </ligand>
</feature>
<feature type="binding site" evidence="1">
    <location>
        <position position="114"/>
    </location>
    <ligand>
        <name>[2Fe-2S] cluster</name>
        <dbReference type="ChEBI" id="CHEBI:190135"/>
    </ligand>
</feature>
<feature type="binding site" evidence="1">
    <location>
        <position position="147"/>
    </location>
    <ligand>
        <name>[2Fe-2S] cluster</name>
        <dbReference type="ChEBI" id="CHEBI:190135"/>
    </ligand>
</feature>
<feature type="binding site" evidence="1">
    <location>
        <position position="207"/>
    </location>
    <ligand>
        <name>[2Fe-2S] cluster</name>
        <dbReference type="ChEBI" id="CHEBI:190135"/>
    </ligand>
</feature>
<feature type="binding site" evidence="1">
    <location>
        <position position="277"/>
    </location>
    <ligand>
        <name>[2Fe-2S] cluster</name>
        <dbReference type="ChEBI" id="CHEBI:190135"/>
    </ligand>
</feature>
<accession>O67104</accession>
<organism>
    <name type="scientific">Aquifex aeolicus (strain VF5)</name>
    <dbReference type="NCBI Taxonomy" id="224324"/>
    <lineage>
        <taxon>Bacteria</taxon>
        <taxon>Pseudomonadati</taxon>
        <taxon>Aquificota</taxon>
        <taxon>Aquificia</taxon>
        <taxon>Aquificales</taxon>
        <taxon>Aquificaceae</taxon>
        <taxon>Aquifex</taxon>
    </lineage>
</organism>
<dbReference type="EC" id="2.8.1.6" evidence="1"/>
<dbReference type="EMBL" id="AE000657">
    <property type="protein sequence ID" value="AAC07061.1"/>
    <property type="molecule type" value="Genomic_DNA"/>
</dbReference>
<dbReference type="PIR" id="E70384">
    <property type="entry name" value="E70384"/>
</dbReference>
<dbReference type="RefSeq" id="NP_213667.1">
    <property type="nucleotide sequence ID" value="NC_000918.1"/>
</dbReference>
<dbReference type="RefSeq" id="WP_010880605.1">
    <property type="nucleotide sequence ID" value="NC_000918.1"/>
</dbReference>
<dbReference type="SMR" id="O67104"/>
<dbReference type="FunCoup" id="O67104">
    <property type="interactions" value="323"/>
</dbReference>
<dbReference type="STRING" id="224324.aq_975"/>
<dbReference type="DNASU" id="1193738"/>
<dbReference type="EnsemblBacteria" id="AAC07061">
    <property type="protein sequence ID" value="AAC07061"/>
    <property type="gene ID" value="aq_975"/>
</dbReference>
<dbReference type="KEGG" id="aae:aq_975"/>
<dbReference type="PATRIC" id="fig|224324.8.peg.767"/>
<dbReference type="eggNOG" id="COG0502">
    <property type="taxonomic scope" value="Bacteria"/>
</dbReference>
<dbReference type="HOGENOM" id="CLU_033172_2_1_0"/>
<dbReference type="InParanoid" id="O67104"/>
<dbReference type="OrthoDB" id="9786826at2"/>
<dbReference type="UniPathway" id="UPA00078">
    <property type="reaction ID" value="UER00162"/>
</dbReference>
<dbReference type="Proteomes" id="UP000000798">
    <property type="component" value="Chromosome"/>
</dbReference>
<dbReference type="GO" id="GO:0051537">
    <property type="term" value="F:2 iron, 2 sulfur cluster binding"/>
    <property type="evidence" value="ECO:0000318"/>
    <property type="project" value="GO_Central"/>
</dbReference>
<dbReference type="GO" id="GO:0051539">
    <property type="term" value="F:4 iron, 4 sulfur cluster binding"/>
    <property type="evidence" value="ECO:0007669"/>
    <property type="project" value="UniProtKB-KW"/>
</dbReference>
<dbReference type="GO" id="GO:0004076">
    <property type="term" value="F:biotin synthase activity"/>
    <property type="evidence" value="ECO:0000318"/>
    <property type="project" value="GO_Central"/>
</dbReference>
<dbReference type="GO" id="GO:0005506">
    <property type="term" value="F:iron ion binding"/>
    <property type="evidence" value="ECO:0007669"/>
    <property type="project" value="UniProtKB-UniRule"/>
</dbReference>
<dbReference type="GO" id="GO:0009102">
    <property type="term" value="P:biotin biosynthetic process"/>
    <property type="evidence" value="ECO:0000318"/>
    <property type="project" value="GO_Central"/>
</dbReference>
<dbReference type="CDD" id="cd01335">
    <property type="entry name" value="Radical_SAM"/>
    <property type="match status" value="1"/>
</dbReference>
<dbReference type="FunFam" id="3.20.20.70:FF:000026">
    <property type="entry name" value="Biotin synthase"/>
    <property type="match status" value="1"/>
</dbReference>
<dbReference type="Gene3D" id="3.20.20.70">
    <property type="entry name" value="Aldolase class I"/>
    <property type="match status" value="1"/>
</dbReference>
<dbReference type="HAMAP" id="MF_01694">
    <property type="entry name" value="BioB"/>
    <property type="match status" value="1"/>
</dbReference>
<dbReference type="InterPro" id="IPR013785">
    <property type="entry name" value="Aldolase_TIM"/>
</dbReference>
<dbReference type="InterPro" id="IPR010722">
    <property type="entry name" value="BATS_dom"/>
</dbReference>
<dbReference type="InterPro" id="IPR002684">
    <property type="entry name" value="Biotin_synth/BioAB"/>
</dbReference>
<dbReference type="InterPro" id="IPR024177">
    <property type="entry name" value="Biotin_synthase"/>
</dbReference>
<dbReference type="InterPro" id="IPR006638">
    <property type="entry name" value="Elp3/MiaA/NifB-like_rSAM"/>
</dbReference>
<dbReference type="InterPro" id="IPR007197">
    <property type="entry name" value="rSAM"/>
</dbReference>
<dbReference type="NCBIfam" id="TIGR00433">
    <property type="entry name" value="bioB"/>
    <property type="match status" value="1"/>
</dbReference>
<dbReference type="PANTHER" id="PTHR22976">
    <property type="entry name" value="BIOTIN SYNTHASE"/>
    <property type="match status" value="1"/>
</dbReference>
<dbReference type="PANTHER" id="PTHR22976:SF2">
    <property type="entry name" value="BIOTIN SYNTHASE, MITOCHONDRIAL"/>
    <property type="match status" value="1"/>
</dbReference>
<dbReference type="Pfam" id="PF06968">
    <property type="entry name" value="BATS"/>
    <property type="match status" value="1"/>
</dbReference>
<dbReference type="Pfam" id="PF04055">
    <property type="entry name" value="Radical_SAM"/>
    <property type="match status" value="1"/>
</dbReference>
<dbReference type="PIRSF" id="PIRSF001619">
    <property type="entry name" value="Biotin_synth"/>
    <property type="match status" value="1"/>
</dbReference>
<dbReference type="SFLD" id="SFLDG01278">
    <property type="entry name" value="biotin_synthase_like"/>
    <property type="match status" value="1"/>
</dbReference>
<dbReference type="SFLD" id="SFLDS00029">
    <property type="entry name" value="Radical_SAM"/>
    <property type="match status" value="1"/>
</dbReference>
<dbReference type="SMART" id="SM00876">
    <property type="entry name" value="BATS"/>
    <property type="match status" value="1"/>
</dbReference>
<dbReference type="SMART" id="SM00729">
    <property type="entry name" value="Elp3"/>
    <property type="match status" value="1"/>
</dbReference>
<dbReference type="SUPFAM" id="SSF102114">
    <property type="entry name" value="Radical SAM enzymes"/>
    <property type="match status" value="1"/>
</dbReference>
<dbReference type="PROSITE" id="PS51918">
    <property type="entry name" value="RADICAL_SAM"/>
    <property type="match status" value="1"/>
</dbReference>
<evidence type="ECO:0000255" key="1">
    <source>
        <dbReference type="HAMAP-Rule" id="MF_01694"/>
    </source>
</evidence>
<evidence type="ECO:0000255" key="2">
    <source>
        <dbReference type="PROSITE-ProRule" id="PRU01266"/>
    </source>
</evidence>
<comment type="function">
    <text evidence="1">Catalyzes the conversion of dethiobiotin (DTB) to biotin by the insertion of a sulfur atom into dethiobiotin via a radical-based mechanism.</text>
</comment>
<comment type="catalytic activity">
    <reaction evidence="1">
        <text>(4R,5S)-dethiobiotin + (sulfur carrier)-SH + 2 reduced [2Fe-2S]-[ferredoxin] + 2 S-adenosyl-L-methionine = (sulfur carrier)-H + biotin + 2 5'-deoxyadenosine + 2 L-methionine + 2 oxidized [2Fe-2S]-[ferredoxin]</text>
        <dbReference type="Rhea" id="RHEA:22060"/>
        <dbReference type="Rhea" id="RHEA-COMP:10000"/>
        <dbReference type="Rhea" id="RHEA-COMP:10001"/>
        <dbReference type="Rhea" id="RHEA-COMP:14737"/>
        <dbReference type="Rhea" id="RHEA-COMP:14739"/>
        <dbReference type="ChEBI" id="CHEBI:17319"/>
        <dbReference type="ChEBI" id="CHEBI:29917"/>
        <dbReference type="ChEBI" id="CHEBI:33737"/>
        <dbReference type="ChEBI" id="CHEBI:33738"/>
        <dbReference type="ChEBI" id="CHEBI:57586"/>
        <dbReference type="ChEBI" id="CHEBI:57844"/>
        <dbReference type="ChEBI" id="CHEBI:59789"/>
        <dbReference type="ChEBI" id="CHEBI:64428"/>
        <dbReference type="ChEBI" id="CHEBI:149473"/>
        <dbReference type="EC" id="2.8.1.6"/>
    </reaction>
</comment>
<comment type="cofactor">
    <cofactor evidence="1">
        <name>[4Fe-4S] cluster</name>
        <dbReference type="ChEBI" id="CHEBI:49883"/>
    </cofactor>
    <text evidence="1">Binds 1 [4Fe-4S] cluster. The cluster is coordinated with 3 cysteines and an exchangeable S-adenosyl-L-methionine.</text>
</comment>
<comment type="cofactor">
    <cofactor evidence="1">
        <name>[2Fe-2S] cluster</name>
        <dbReference type="ChEBI" id="CHEBI:190135"/>
    </cofactor>
    <text evidence="1">Binds 1 [2Fe-2S] cluster. The cluster is coordinated with 3 cysteines and 1 arginine.</text>
</comment>
<comment type="pathway">
    <text evidence="1">Cofactor biosynthesis; biotin biosynthesis; biotin from 7,8-diaminononanoate: step 2/2.</text>
</comment>
<comment type="subunit">
    <text evidence="1">Homodimer.</text>
</comment>
<comment type="similarity">
    <text evidence="1">Belongs to the radical SAM superfamily. Biotin synthase family.</text>
</comment>
<sequence>MDKVERRLYELYEKAINYEPLSKEEALYILEVDDIYVPFLVHLAQKIKKHYFPENEVEFCSIINAKSGACSEDCKFCAQSKYYKTPINVYNLVPVDEMVEGAIRGVEFGANRYCIVLSGKSATKEEVERITEAVKEIKNEGLPINVCVSAGTLDEESLKKLKEAGVKRINHNLETSRNFFKNIVTTHTWEDRYETIKRIKKVGLSTCSGGIFGMGESNEDRVDMALTYRELEVDSIPLNFLMPIEGTPMENAPGVEVMEALKIIAMFRFTNPKAELRLCGGREQNLRDFHGMATLMTNAMMVGGYLTRAGRDIKKDYQLLKDLKAKRKVSVE</sequence>
<keyword id="KW-0001">2Fe-2S</keyword>
<keyword id="KW-0004">4Fe-4S</keyword>
<keyword id="KW-0093">Biotin biosynthesis</keyword>
<keyword id="KW-0408">Iron</keyword>
<keyword id="KW-0411">Iron-sulfur</keyword>
<keyword id="KW-0479">Metal-binding</keyword>
<keyword id="KW-1185">Reference proteome</keyword>
<keyword id="KW-0949">S-adenosyl-L-methionine</keyword>
<keyword id="KW-0808">Transferase</keyword>
<protein>
    <recommendedName>
        <fullName evidence="1">Biotin synthase</fullName>
        <ecNumber evidence="1">2.8.1.6</ecNumber>
    </recommendedName>
</protein>